<comment type="similarity">
    <text evidence="1">Belongs to the bacterial ribosomal protein bS16 family.</text>
</comment>
<organism>
    <name type="scientific">Lactococcus lactis subsp. cremoris (strain SK11)</name>
    <dbReference type="NCBI Taxonomy" id="272622"/>
    <lineage>
        <taxon>Bacteria</taxon>
        <taxon>Bacillati</taxon>
        <taxon>Bacillota</taxon>
        <taxon>Bacilli</taxon>
        <taxon>Lactobacillales</taxon>
        <taxon>Streptococcaceae</taxon>
        <taxon>Lactococcus</taxon>
        <taxon>Lactococcus cremoris subsp. cremoris</taxon>
    </lineage>
</organism>
<feature type="chain" id="PRO_1000049278" description="Small ribosomal subunit protein bS16">
    <location>
        <begin position="1"/>
        <end position="90"/>
    </location>
</feature>
<protein>
    <recommendedName>
        <fullName evidence="1">Small ribosomal subunit protein bS16</fullName>
    </recommendedName>
    <alternativeName>
        <fullName evidence="2">30S ribosomal protein S16</fullName>
    </alternativeName>
</protein>
<evidence type="ECO:0000255" key="1">
    <source>
        <dbReference type="HAMAP-Rule" id="MF_00385"/>
    </source>
</evidence>
<evidence type="ECO:0000305" key="2"/>
<proteinExistence type="inferred from homology"/>
<sequence>MSVKIRLTRMGSKKKPFYRINVADSRAPRDGKFIETVGTYNPLLTENQVTLKEERVLEWLSNGAQPSDTVRNLLSKAGVMKKFHESKLSK</sequence>
<gene>
    <name evidence="1" type="primary">rpsP</name>
    <name type="ordered locus">LACR_1663</name>
</gene>
<keyword id="KW-0687">Ribonucleoprotein</keyword>
<keyword id="KW-0689">Ribosomal protein</keyword>
<accession>Q02Y12</accession>
<dbReference type="EMBL" id="CP000425">
    <property type="protein sequence ID" value="ABJ73160.1"/>
    <property type="molecule type" value="Genomic_DNA"/>
</dbReference>
<dbReference type="RefSeq" id="WP_011676599.1">
    <property type="nucleotide sequence ID" value="NC_008527.1"/>
</dbReference>
<dbReference type="SMR" id="Q02Y12"/>
<dbReference type="KEGG" id="llc:LACR_1663"/>
<dbReference type="HOGENOM" id="CLU_100590_5_0_9"/>
<dbReference type="Proteomes" id="UP000000240">
    <property type="component" value="Chromosome"/>
</dbReference>
<dbReference type="GO" id="GO:0005737">
    <property type="term" value="C:cytoplasm"/>
    <property type="evidence" value="ECO:0007669"/>
    <property type="project" value="UniProtKB-ARBA"/>
</dbReference>
<dbReference type="GO" id="GO:0015935">
    <property type="term" value="C:small ribosomal subunit"/>
    <property type="evidence" value="ECO:0007669"/>
    <property type="project" value="TreeGrafter"/>
</dbReference>
<dbReference type="GO" id="GO:0003735">
    <property type="term" value="F:structural constituent of ribosome"/>
    <property type="evidence" value="ECO:0007669"/>
    <property type="project" value="InterPro"/>
</dbReference>
<dbReference type="GO" id="GO:0006412">
    <property type="term" value="P:translation"/>
    <property type="evidence" value="ECO:0007669"/>
    <property type="project" value="UniProtKB-UniRule"/>
</dbReference>
<dbReference type="FunFam" id="3.30.1320.10:FF:000002">
    <property type="entry name" value="30S ribosomal protein S16"/>
    <property type="match status" value="1"/>
</dbReference>
<dbReference type="Gene3D" id="3.30.1320.10">
    <property type="match status" value="1"/>
</dbReference>
<dbReference type="HAMAP" id="MF_00385">
    <property type="entry name" value="Ribosomal_bS16"/>
    <property type="match status" value="1"/>
</dbReference>
<dbReference type="InterPro" id="IPR000307">
    <property type="entry name" value="Ribosomal_bS16"/>
</dbReference>
<dbReference type="InterPro" id="IPR023803">
    <property type="entry name" value="Ribosomal_bS16_dom_sf"/>
</dbReference>
<dbReference type="NCBIfam" id="TIGR00002">
    <property type="entry name" value="S16"/>
    <property type="match status" value="1"/>
</dbReference>
<dbReference type="PANTHER" id="PTHR12919">
    <property type="entry name" value="30S RIBOSOMAL PROTEIN S16"/>
    <property type="match status" value="1"/>
</dbReference>
<dbReference type="PANTHER" id="PTHR12919:SF20">
    <property type="entry name" value="SMALL RIBOSOMAL SUBUNIT PROTEIN BS16M"/>
    <property type="match status" value="1"/>
</dbReference>
<dbReference type="Pfam" id="PF00886">
    <property type="entry name" value="Ribosomal_S16"/>
    <property type="match status" value="1"/>
</dbReference>
<dbReference type="SUPFAM" id="SSF54565">
    <property type="entry name" value="Ribosomal protein S16"/>
    <property type="match status" value="1"/>
</dbReference>
<name>RS16_LACLS</name>
<reference key="1">
    <citation type="journal article" date="2006" name="Proc. Natl. Acad. Sci. U.S.A.">
        <title>Comparative genomics of the lactic acid bacteria.</title>
        <authorList>
            <person name="Makarova K.S."/>
            <person name="Slesarev A."/>
            <person name="Wolf Y.I."/>
            <person name="Sorokin A."/>
            <person name="Mirkin B."/>
            <person name="Koonin E.V."/>
            <person name="Pavlov A."/>
            <person name="Pavlova N."/>
            <person name="Karamychev V."/>
            <person name="Polouchine N."/>
            <person name="Shakhova V."/>
            <person name="Grigoriev I."/>
            <person name="Lou Y."/>
            <person name="Rohksar D."/>
            <person name="Lucas S."/>
            <person name="Huang K."/>
            <person name="Goodstein D.M."/>
            <person name="Hawkins T."/>
            <person name="Plengvidhya V."/>
            <person name="Welker D."/>
            <person name="Hughes J."/>
            <person name="Goh Y."/>
            <person name="Benson A."/>
            <person name="Baldwin K."/>
            <person name="Lee J.-H."/>
            <person name="Diaz-Muniz I."/>
            <person name="Dosti B."/>
            <person name="Smeianov V."/>
            <person name="Wechter W."/>
            <person name="Barabote R."/>
            <person name="Lorca G."/>
            <person name="Altermann E."/>
            <person name="Barrangou R."/>
            <person name="Ganesan B."/>
            <person name="Xie Y."/>
            <person name="Rawsthorne H."/>
            <person name="Tamir D."/>
            <person name="Parker C."/>
            <person name="Breidt F."/>
            <person name="Broadbent J.R."/>
            <person name="Hutkins R."/>
            <person name="O'Sullivan D."/>
            <person name="Steele J."/>
            <person name="Unlu G."/>
            <person name="Saier M.H. Jr."/>
            <person name="Klaenhammer T."/>
            <person name="Richardson P."/>
            <person name="Kozyavkin S."/>
            <person name="Weimer B.C."/>
            <person name="Mills D.A."/>
        </authorList>
    </citation>
    <scope>NUCLEOTIDE SEQUENCE [LARGE SCALE GENOMIC DNA]</scope>
    <source>
        <strain>SK11</strain>
    </source>
</reference>